<organism>
    <name type="scientific">Methanocaldococcus jannaschii (strain ATCC 43067 / DSM 2661 / JAL-1 / JCM 10045 / NBRC 100440)</name>
    <name type="common">Methanococcus jannaschii</name>
    <dbReference type="NCBI Taxonomy" id="243232"/>
    <lineage>
        <taxon>Archaea</taxon>
        <taxon>Methanobacteriati</taxon>
        <taxon>Methanobacteriota</taxon>
        <taxon>Methanomada group</taxon>
        <taxon>Methanococci</taxon>
        <taxon>Methanococcales</taxon>
        <taxon>Methanocaldococcaceae</taxon>
        <taxon>Methanocaldococcus</taxon>
    </lineage>
</organism>
<feature type="chain" id="PRO_0000107055" description="Uncharacterized protein MJ0805">
    <location>
        <begin position="1"/>
        <end position="221"/>
    </location>
</feature>
<dbReference type="EMBL" id="L77117">
    <property type="protein sequence ID" value="AAB98805.1"/>
    <property type="molecule type" value="Genomic_DNA"/>
</dbReference>
<dbReference type="PIR" id="E64400">
    <property type="entry name" value="E64400"/>
</dbReference>
<dbReference type="SMR" id="Q58215"/>
<dbReference type="STRING" id="243232.MJ_0805"/>
<dbReference type="PaxDb" id="243232-MJ_0805"/>
<dbReference type="EnsemblBacteria" id="AAB98805">
    <property type="protein sequence ID" value="AAB98805"/>
    <property type="gene ID" value="MJ_0805"/>
</dbReference>
<dbReference type="KEGG" id="mja:MJ_0805"/>
<dbReference type="eggNOG" id="arCOG04875">
    <property type="taxonomic scope" value="Archaea"/>
</dbReference>
<dbReference type="HOGENOM" id="CLU_113977_0_0_2"/>
<dbReference type="InParanoid" id="Q58215"/>
<dbReference type="PhylomeDB" id="Q58215"/>
<dbReference type="Proteomes" id="UP000000805">
    <property type="component" value="Chromosome"/>
</dbReference>
<dbReference type="Gene3D" id="3.30.930.10">
    <property type="entry name" value="Bira Bifunctional Protein, Domain 2"/>
    <property type="match status" value="1"/>
</dbReference>
<dbReference type="InterPro" id="IPR045864">
    <property type="entry name" value="aa-tRNA-synth_II/BPL/LPL"/>
</dbReference>
<dbReference type="InterPro" id="IPR007162">
    <property type="entry name" value="DUF366"/>
</dbReference>
<dbReference type="Pfam" id="PF04017">
    <property type="entry name" value="DUF366"/>
    <property type="match status" value="1"/>
</dbReference>
<dbReference type="PIRSF" id="PIRSF006503">
    <property type="entry name" value="UCP006503"/>
    <property type="match status" value="1"/>
</dbReference>
<dbReference type="SUPFAM" id="SSF55681">
    <property type="entry name" value="Class II aaRS and biotin synthetases"/>
    <property type="match status" value="1"/>
</dbReference>
<sequence>MMYSRKFQILKENIGLYHGDFMDFEVYDTEYMSIIFVKDRLDYTGKEIEPLWAFKTFDIQKDSIVVFRGRMEVTTENMKDLKDIKREKDIKTPIKSEDAINFVVEHFDVIDLKTIYLRQRLLVFIAKEVIESYNIKLKRDGDDLYFEDKKLSVCIACKGTVSAKIHLGINVKSKGAEHVKIIGLEDLGIKDIDKVMREIAINYAKEIDKIERDLRKTLPLI</sequence>
<gene>
    <name type="ordered locus">MJ0805</name>
</gene>
<keyword id="KW-1185">Reference proteome</keyword>
<proteinExistence type="predicted"/>
<protein>
    <recommendedName>
        <fullName>Uncharacterized protein MJ0805</fullName>
    </recommendedName>
</protein>
<name>Y805_METJA</name>
<reference key="1">
    <citation type="journal article" date="1996" name="Science">
        <title>Complete genome sequence of the methanogenic archaeon, Methanococcus jannaschii.</title>
        <authorList>
            <person name="Bult C.J."/>
            <person name="White O."/>
            <person name="Olsen G.J."/>
            <person name="Zhou L."/>
            <person name="Fleischmann R.D."/>
            <person name="Sutton G.G."/>
            <person name="Blake J.A."/>
            <person name="FitzGerald L.M."/>
            <person name="Clayton R.A."/>
            <person name="Gocayne J.D."/>
            <person name="Kerlavage A.R."/>
            <person name="Dougherty B.A."/>
            <person name="Tomb J.-F."/>
            <person name="Adams M.D."/>
            <person name="Reich C.I."/>
            <person name="Overbeek R."/>
            <person name="Kirkness E.F."/>
            <person name="Weinstock K.G."/>
            <person name="Merrick J.M."/>
            <person name="Glodek A."/>
            <person name="Scott J.L."/>
            <person name="Geoghagen N.S.M."/>
            <person name="Weidman J.F."/>
            <person name="Fuhrmann J.L."/>
            <person name="Nguyen D."/>
            <person name="Utterback T.R."/>
            <person name="Kelley J.M."/>
            <person name="Peterson J.D."/>
            <person name="Sadow P.W."/>
            <person name="Hanna M.C."/>
            <person name="Cotton M.D."/>
            <person name="Roberts K.M."/>
            <person name="Hurst M.A."/>
            <person name="Kaine B.P."/>
            <person name="Borodovsky M."/>
            <person name="Klenk H.-P."/>
            <person name="Fraser C.M."/>
            <person name="Smith H.O."/>
            <person name="Woese C.R."/>
            <person name="Venter J.C."/>
        </authorList>
    </citation>
    <scope>NUCLEOTIDE SEQUENCE [LARGE SCALE GENOMIC DNA]</scope>
    <source>
        <strain>ATCC 43067 / DSM 2661 / JAL-1 / JCM 10045 / NBRC 100440</strain>
    </source>
</reference>
<accession>Q58215</accession>